<feature type="chain" id="PRO_0000119673" description="Glutamate--tRNA ligase">
    <location>
        <begin position="1"/>
        <end position="482"/>
    </location>
</feature>
<feature type="short sequence motif" description="'HIGH' region" evidence="1">
    <location>
        <begin position="9"/>
        <end position="19"/>
    </location>
</feature>
<feature type="short sequence motif" description="'KMSKS' region" evidence="1">
    <location>
        <begin position="250"/>
        <end position="254"/>
    </location>
</feature>
<feature type="binding site" evidence="1">
    <location>
        <position position="106"/>
    </location>
    <ligand>
        <name>Zn(2+)</name>
        <dbReference type="ChEBI" id="CHEBI:29105"/>
    </ligand>
</feature>
<feature type="binding site" evidence="1">
    <location>
        <position position="108"/>
    </location>
    <ligand>
        <name>Zn(2+)</name>
        <dbReference type="ChEBI" id="CHEBI:29105"/>
    </ligand>
</feature>
<feature type="binding site" evidence="1">
    <location>
        <position position="133"/>
    </location>
    <ligand>
        <name>Zn(2+)</name>
        <dbReference type="ChEBI" id="CHEBI:29105"/>
    </ligand>
</feature>
<feature type="binding site" evidence="1">
    <location>
        <position position="135"/>
    </location>
    <ligand>
        <name>Zn(2+)</name>
        <dbReference type="ChEBI" id="CHEBI:29105"/>
    </ligand>
</feature>
<feature type="binding site" evidence="1">
    <location>
        <position position="253"/>
    </location>
    <ligand>
        <name>ATP</name>
        <dbReference type="ChEBI" id="CHEBI:30616"/>
    </ligand>
</feature>
<gene>
    <name evidence="1" type="primary">gltX</name>
    <name type="ordered locus">STH16</name>
</gene>
<evidence type="ECO:0000255" key="1">
    <source>
        <dbReference type="HAMAP-Rule" id="MF_00022"/>
    </source>
</evidence>
<comment type="function">
    <text evidence="1">Catalyzes the attachment of glutamate to tRNA(Glu) in a two-step reaction: glutamate is first activated by ATP to form Glu-AMP and then transferred to the acceptor end of tRNA(Glu).</text>
</comment>
<comment type="catalytic activity">
    <reaction evidence="1">
        <text>tRNA(Glu) + L-glutamate + ATP = L-glutamyl-tRNA(Glu) + AMP + diphosphate</text>
        <dbReference type="Rhea" id="RHEA:23540"/>
        <dbReference type="Rhea" id="RHEA-COMP:9663"/>
        <dbReference type="Rhea" id="RHEA-COMP:9680"/>
        <dbReference type="ChEBI" id="CHEBI:29985"/>
        <dbReference type="ChEBI" id="CHEBI:30616"/>
        <dbReference type="ChEBI" id="CHEBI:33019"/>
        <dbReference type="ChEBI" id="CHEBI:78442"/>
        <dbReference type="ChEBI" id="CHEBI:78520"/>
        <dbReference type="ChEBI" id="CHEBI:456215"/>
        <dbReference type="EC" id="6.1.1.17"/>
    </reaction>
</comment>
<comment type="cofactor">
    <cofactor evidence="1">
        <name>Zn(2+)</name>
        <dbReference type="ChEBI" id="CHEBI:29105"/>
    </cofactor>
    <text evidence="1">Binds 1 zinc ion per subunit.</text>
</comment>
<comment type="subunit">
    <text evidence="1">Monomer.</text>
</comment>
<comment type="subcellular location">
    <subcellularLocation>
        <location evidence="1">Cytoplasm</location>
    </subcellularLocation>
</comment>
<comment type="similarity">
    <text evidence="1">Belongs to the class-I aminoacyl-tRNA synthetase family. Glutamate--tRNA ligase type 1 subfamily.</text>
</comment>
<organism>
    <name type="scientific">Symbiobacterium thermophilum (strain DSM 24528 / JCM 14929 / IAM 14863 / T)</name>
    <dbReference type="NCBI Taxonomy" id="292459"/>
    <lineage>
        <taxon>Bacteria</taxon>
        <taxon>Bacillati</taxon>
        <taxon>Bacillota</taxon>
        <taxon>Clostridia</taxon>
        <taxon>Eubacteriales</taxon>
        <taxon>Symbiobacteriaceae</taxon>
        <taxon>Symbiobacterium</taxon>
    </lineage>
</organism>
<dbReference type="EC" id="6.1.1.17" evidence="1"/>
<dbReference type="EMBL" id="AP006840">
    <property type="protein sequence ID" value="BAD39001.1"/>
    <property type="molecule type" value="Genomic_DNA"/>
</dbReference>
<dbReference type="RefSeq" id="WP_011194151.1">
    <property type="nucleotide sequence ID" value="NC_006177.1"/>
</dbReference>
<dbReference type="SMR" id="Q67TJ2"/>
<dbReference type="STRING" id="292459.STH16"/>
<dbReference type="KEGG" id="sth:STH16"/>
<dbReference type="eggNOG" id="COG0008">
    <property type="taxonomic scope" value="Bacteria"/>
</dbReference>
<dbReference type="HOGENOM" id="CLU_015768_6_3_9"/>
<dbReference type="OrthoDB" id="9807503at2"/>
<dbReference type="Proteomes" id="UP000000417">
    <property type="component" value="Chromosome"/>
</dbReference>
<dbReference type="GO" id="GO:0005829">
    <property type="term" value="C:cytosol"/>
    <property type="evidence" value="ECO:0007669"/>
    <property type="project" value="TreeGrafter"/>
</dbReference>
<dbReference type="GO" id="GO:0005524">
    <property type="term" value="F:ATP binding"/>
    <property type="evidence" value="ECO:0007669"/>
    <property type="project" value="UniProtKB-UniRule"/>
</dbReference>
<dbReference type="GO" id="GO:0004818">
    <property type="term" value="F:glutamate-tRNA ligase activity"/>
    <property type="evidence" value="ECO:0007669"/>
    <property type="project" value="UniProtKB-UniRule"/>
</dbReference>
<dbReference type="GO" id="GO:0000049">
    <property type="term" value="F:tRNA binding"/>
    <property type="evidence" value="ECO:0007669"/>
    <property type="project" value="InterPro"/>
</dbReference>
<dbReference type="GO" id="GO:0008270">
    <property type="term" value="F:zinc ion binding"/>
    <property type="evidence" value="ECO:0007669"/>
    <property type="project" value="UniProtKB-UniRule"/>
</dbReference>
<dbReference type="GO" id="GO:0006424">
    <property type="term" value="P:glutamyl-tRNA aminoacylation"/>
    <property type="evidence" value="ECO:0007669"/>
    <property type="project" value="UniProtKB-UniRule"/>
</dbReference>
<dbReference type="CDD" id="cd00808">
    <property type="entry name" value="GluRS_core"/>
    <property type="match status" value="1"/>
</dbReference>
<dbReference type="FunFam" id="3.40.50.620:FF:000007">
    <property type="entry name" value="Glutamate--tRNA ligase"/>
    <property type="match status" value="1"/>
</dbReference>
<dbReference type="Gene3D" id="1.10.10.350">
    <property type="match status" value="1"/>
</dbReference>
<dbReference type="Gene3D" id="1.10.8.70">
    <property type="entry name" value="Glutamate-tRNA synthetase, class I, anticodon-binding domain 1"/>
    <property type="match status" value="1"/>
</dbReference>
<dbReference type="Gene3D" id="3.40.50.620">
    <property type="entry name" value="HUPs"/>
    <property type="match status" value="1"/>
</dbReference>
<dbReference type="HAMAP" id="MF_00022">
    <property type="entry name" value="Glu_tRNA_synth_type1"/>
    <property type="match status" value="1"/>
</dbReference>
<dbReference type="InterPro" id="IPR045462">
    <property type="entry name" value="aa-tRNA-synth_I_cd-bd"/>
</dbReference>
<dbReference type="InterPro" id="IPR020751">
    <property type="entry name" value="aa-tRNA-synth_I_codon-bd_sub2"/>
</dbReference>
<dbReference type="InterPro" id="IPR001412">
    <property type="entry name" value="aa-tRNA-synth_I_CS"/>
</dbReference>
<dbReference type="InterPro" id="IPR008925">
    <property type="entry name" value="aa_tRNA-synth_I_cd-bd_sf"/>
</dbReference>
<dbReference type="InterPro" id="IPR004527">
    <property type="entry name" value="Glu-tRNA-ligase_bac/mito"/>
</dbReference>
<dbReference type="InterPro" id="IPR020752">
    <property type="entry name" value="Glu-tRNA-synth_I_codon-bd_sub1"/>
</dbReference>
<dbReference type="InterPro" id="IPR000924">
    <property type="entry name" value="Glu/Gln-tRNA-synth"/>
</dbReference>
<dbReference type="InterPro" id="IPR020058">
    <property type="entry name" value="Glu/Gln-tRNA-synth_Ib_cat-dom"/>
</dbReference>
<dbReference type="InterPro" id="IPR049940">
    <property type="entry name" value="GluQ/Sye"/>
</dbReference>
<dbReference type="InterPro" id="IPR033910">
    <property type="entry name" value="GluRS_core"/>
</dbReference>
<dbReference type="InterPro" id="IPR014729">
    <property type="entry name" value="Rossmann-like_a/b/a_fold"/>
</dbReference>
<dbReference type="NCBIfam" id="TIGR00464">
    <property type="entry name" value="gltX_bact"/>
    <property type="match status" value="1"/>
</dbReference>
<dbReference type="PANTHER" id="PTHR43311">
    <property type="entry name" value="GLUTAMATE--TRNA LIGASE"/>
    <property type="match status" value="1"/>
</dbReference>
<dbReference type="PANTHER" id="PTHR43311:SF2">
    <property type="entry name" value="GLUTAMATE--TRNA LIGASE, MITOCHONDRIAL-RELATED"/>
    <property type="match status" value="1"/>
</dbReference>
<dbReference type="Pfam" id="PF19269">
    <property type="entry name" value="Anticodon_2"/>
    <property type="match status" value="1"/>
</dbReference>
<dbReference type="Pfam" id="PF00749">
    <property type="entry name" value="tRNA-synt_1c"/>
    <property type="match status" value="1"/>
</dbReference>
<dbReference type="PRINTS" id="PR00987">
    <property type="entry name" value="TRNASYNTHGLU"/>
</dbReference>
<dbReference type="SUPFAM" id="SSF48163">
    <property type="entry name" value="An anticodon-binding domain of class I aminoacyl-tRNA synthetases"/>
    <property type="match status" value="1"/>
</dbReference>
<dbReference type="SUPFAM" id="SSF52374">
    <property type="entry name" value="Nucleotidylyl transferase"/>
    <property type="match status" value="1"/>
</dbReference>
<dbReference type="PROSITE" id="PS00178">
    <property type="entry name" value="AA_TRNA_LIGASE_I"/>
    <property type="match status" value="1"/>
</dbReference>
<reference key="1">
    <citation type="journal article" date="2004" name="Nucleic Acids Res.">
        <title>Genome sequence of Symbiobacterium thermophilum, an uncultivable bacterium that depends on microbial commensalism.</title>
        <authorList>
            <person name="Ueda K."/>
            <person name="Yamashita A."/>
            <person name="Ishikawa J."/>
            <person name="Shimada M."/>
            <person name="Watsuji T."/>
            <person name="Morimura K."/>
            <person name="Ikeda H."/>
            <person name="Hattori M."/>
            <person name="Beppu T."/>
        </authorList>
    </citation>
    <scope>NUCLEOTIDE SEQUENCE [LARGE SCALE GENOMIC DNA]</scope>
    <source>
        <strain>DSM 24528 / JCM 14929 / IAM 14863 / T</strain>
    </source>
</reference>
<proteinExistence type="inferred from homology"/>
<accession>Q67TJ2</accession>
<sequence length="482" mass="55490">MTVRVRIAPSPTGPIHVGNVHTALFNWLFARHHGGKFILRFEDTDLERSRPEWEQVIFEDLKWLGIDWDEGPDIGGPYGPYRQTERLDLYRKYAQQLLESGHVYKCYCTKEEEDADRREAQAAGRPYQYKGRCRDLTPEQQAAFEAEGRKPVLRFRVPRGEVIRFNDLVRGPIEVPTDSIGDFIIMRANGMPLYNFAVVVDDVTMNITHVLRGEGHIPNTPVQILIYQALGFPVPEFGHLGHMTNPERGKLSKRKGEAAIRDYREQGYLPEAMLNFMSLLGWTPPGAESGREFLTKEELIREFDLSRVTKASSVFDRNKLNWMNGVYIRKKSLEEFAELALPFVVSAGLCTEEQARARWDWFKEVMAQVHERVETLAEIPQHVDIFLKDEIEMDEKAARKFLTEAVKPFFQRVSEGLRSVEWSVPAIEQLVRSIQEEMGLTPKESFQPIRVAITGRTASPGLFETIYLIGRERVLERMAPYC</sequence>
<keyword id="KW-0030">Aminoacyl-tRNA synthetase</keyword>
<keyword id="KW-0067">ATP-binding</keyword>
<keyword id="KW-0963">Cytoplasm</keyword>
<keyword id="KW-0436">Ligase</keyword>
<keyword id="KW-0479">Metal-binding</keyword>
<keyword id="KW-0547">Nucleotide-binding</keyword>
<keyword id="KW-0648">Protein biosynthesis</keyword>
<keyword id="KW-1185">Reference proteome</keyword>
<keyword id="KW-0862">Zinc</keyword>
<name>SYE_SYMTH</name>
<protein>
    <recommendedName>
        <fullName evidence="1">Glutamate--tRNA ligase</fullName>
        <ecNumber evidence="1">6.1.1.17</ecNumber>
    </recommendedName>
    <alternativeName>
        <fullName evidence="1">Glutamyl-tRNA synthetase</fullName>
        <shortName evidence="1">GluRS</shortName>
    </alternativeName>
</protein>